<gene>
    <name type="primary">CPB1</name>
    <name type="synonym">CPB</name>
</gene>
<name>CBPB1_CANLF</name>
<comment type="catalytic activity">
    <reaction evidence="3">
        <text>Preferential release of a C-terminal lysine or arginine amino acid.</text>
        <dbReference type="EC" id="3.4.17.2"/>
    </reaction>
</comment>
<comment type="cofactor">
    <cofactor evidence="4">
        <name>Zn(2+)</name>
        <dbReference type="ChEBI" id="CHEBI:29105"/>
    </cofactor>
    <text evidence="4">Binds 1 zinc ion per subunit.</text>
</comment>
<comment type="subcellular location">
    <subcellularLocation>
        <location evidence="8">Secreted</location>
    </subcellularLocation>
    <subcellularLocation>
        <location evidence="8">Zymogen granule lumen</location>
    </subcellularLocation>
</comment>
<comment type="similarity">
    <text evidence="7">Belongs to the peptidase M14 family.</text>
</comment>
<protein>
    <recommendedName>
        <fullName>Carboxypeptidase B</fullName>
        <ecNumber evidence="3">3.4.17.2</ecNumber>
    </recommendedName>
    <alternativeName>
        <fullName evidence="6">47 kDa zymogen granule membrane-associated protein</fullName>
    </alternativeName>
    <alternativeName>
        <fullName evidence="6">ZAP47</fullName>
    </alternativeName>
</protein>
<proteinExistence type="evidence at protein level"/>
<reference key="1">
    <citation type="submission" date="1995-11" db="EMBL/GenBank/DDBJ databases">
        <title>Characterization and expression of cDNA encoding a dog zymogen granule membrane associated protein, ZAP47.</title>
        <authorList>
            <person name="Fukuoka S."/>
        </authorList>
    </citation>
    <scope>NUCLEOTIDE SEQUENCE [MRNA]</scope>
    <source>
        <tissue>Pancreas</tissue>
    </source>
</reference>
<reference key="2">
    <citation type="journal article" date="1994" name="Biosci. Biotechnol. Biochem.">
        <title>Analysis of ZAPs, zymogen granule membrane associated proteins, in the regulated exocytosis of the pancreas.</title>
        <authorList>
            <person name="Fukuoka S."/>
        </authorList>
    </citation>
    <scope>PROTEIN SEQUENCE OF 29-45</scope>
    <scope>SUBCELLULAR LOCATION</scope>
</reference>
<dbReference type="EC" id="3.4.17.2" evidence="3"/>
<dbReference type="EMBL" id="D78348">
    <property type="protein sequence ID" value="BAA11366.1"/>
    <property type="molecule type" value="mRNA"/>
</dbReference>
<dbReference type="PIR" id="PC2196">
    <property type="entry name" value="PC2196"/>
</dbReference>
<dbReference type="FunCoup" id="P55261">
    <property type="interactions" value="12"/>
</dbReference>
<dbReference type="MEROPS" id="M14.003"/>
<dbReference type="PaxDb" id="9612-ENSCAFP00000012089"/>
<dbReference type="eggNOG" id="KOG2650">
    <property type="taxonomic scope" value="Eukaryota"/>
</dbReference>
<dbReference type="InParanoid" id="P55261"/>
<dbReference type="Proteomes" id="UP000002254">
    <property type="component" value="Unplaced"/>
</dbReference>
<dbReference type="Proteomes" id="UP000694429">
    <property type="component" value="Unplaced"/>
</dbReference>
<dbReference type="Proteomes" id="UP000694542">
    <property type="component" value="Unplaced"/>
</dbReference>
<dbReference type="Proteomes" id="UP000805418">
    <property type="component" value="Unplaced"/>
</dbReference>
<dbReference type="GO" id="GO:0031410">
    <property type="term" value="C:cytoplasmic vesicle"/>
    <property type="evidence" value="ECO:0007669"/>
    <property type="project" value="UniProtKB-KW"/>
</dbReference>
<dbReference type="GO" id="GO:0005615">
    <property type="term" value="C:extracellular space"/>
    <property type="evidence" value="ECO:0000318"/>
    <property type="project" value="GO_Central"/>
</dbReference>
<dbReference type="GO" id="GO:0004181">
    <property type="term" value="F:metallocarboxypeptidase activity"/>
    <property type="evidence" value="ECO:0000318"/>
    <property type="project" value="GO_Central"/>
</dbReference>
<dbReference type="GO" id="GO:0008270">
    <property type="term" value="F:zinc ion binding"/>
    <property type="evidence" value="ECO:0007669"/>
    <property type="project" value="InterPro"/>
</dbReference>
<dbReference type="GO" id="GO:0006508">
    <property type="term" value="P:proteolysis"/>
    <property type="evidence" value="ECO:0000318"/>
    <property type="project" value="GO_Central"/>
</dbReference>
<dbReference type="CDD" id="cd03871">
    <property type="entry name" value="M14_CPB"/>
    <property type="match status" value="1"/>
</dbReference>
<dbReference type="FunFam" id="3.30.70.340:FF:000002">
    <property type="entry name" value="Carboxypeptidase A"/>
    <property type="match status" value="1"/>
</dbReference>
<dbReference type="FunFam" id="3.40.630.10:FF:000001">
    <property type="entry name" value="Carboxypeptidase B"/>
    <property type="match status" value="1"/>
</dbReference>
<dbReference type="Gene3D" id="3.30.70.340">
    <property type="entry name" value="Metallocarboxypeptidase-like"/>
    <property type="match status" value="1"/>
</dbReference>
<dbReference type="Gene3D" id="3.40.630.10">
    <property type="entry name" value="Zn peptidases"/>
    <property type="match status" value="1"/>
</dbReference>
<dbReference type="InterPro" id="IPR034253">
    <property type="entry name" value="CPB_M14_CPD"/>
</dbReference>
<dbReference type="InterPro" id="IPR036990">
    <property type="entry name" value="M14A-like_propep"/>
</dbReference>
<dbReference type="InterPro" id="IPR003146">
    <property type="entry name" value="M14A_act_pep"/>
</dbReference>
<dbReference type="InterPro" id="IPR000834">
    <property type="entry name" value="Peptidase_M14"/>
</dbReference>
<dbReference type="PANTHER" id="PTHR11705:SF20">
    <property type="entry name" value="CARBOXYPEPTIDASE B"/>
    <property type="match status" value="1"/>
</dbReference>
<dbReference type="PANTHER" id="PTHR11705">
    <property type="entry name" value="PROTEASE FAMILY M14 CARBOXYPEPTIDASE A,B"/>
    <property type="match status" value="1"/>
</dbReference>
<dbReference type="Pfam" id="PF00246">
    <property type="entry name" value="Peptidase_M14"/>
    <property type="match status" value="1"/>
</dbReference>
<dbReference type="Pfam" id="PF02244">
    <property type="entry name" value="Propep_M14"/>
    <property type="match status" value="1"/>
</dbReference>
<dbReference type="PRINTS" id="PR00765">
    <property type="entry name" value="CRBOXYPTASEA"/>
</dbReference>
<dbReference type="SMART" id="SM00631">
    <property type="entry name" value="Zn_pept"/>
    <property type="match status" value="1"/>
</dbReference>
<dbReference type="SUPFAM" id="SSF54897">
    <property type="entry name" value="Protease propeptides/inhibitors"/>
    <property type="match status" value="1"/>
</dbReference>
<dbReference type="SUPFAM" id="SSF53187">
    <property type="entry name" value="Zn-dependent exopeptidases"/>
    <property type="match status" value="1"/>
</dbReference>
<dbReference type="PROSITE" id="PS00132">
    <property type="entry name" value="CARBOXYPEPT_ZN_1"/>
    <property type="match status" value="1"/>
</dbReference>
<dbReference type="PROSITE" id="PS00133">
    <property type="entry name" value="CARBOXYPEPT_ZN_2"/>
    <property type="match status" value="1"/>
</dbReference>
<dbReference type="PROSITE" id="PS52035">
    <property type="entry name" value="PEPTIDASE_M14"/>
    <property type="match status" value="1"/>
</dbReference>
<feature type="signal peptide" evidence="4">
    <location>
        <begin position="1"/>
        <end position="15"/>
    </location>
</feature>
<feature type="propeptide" id="PRO_0000004369" description="Activation peptide" evidence="1">
    <location>
        <begin position="16"/>
        <end position="109"/>
    </location>
</feature>
<feature type="chain" id="PRO_0000004370" description="Carboxypeptidase B">
    <location>
        <begin position="110"/>
        <end position="416"/>
    </location>
</feature>
<feature type="domain" description="Peptidase M14" evidence="5">
    <location>
        <begin position="117"/>
        <end position="411"/>
    </location>
</feature>
<feature type="active site" description="Proton donor/acceptor" evidence="5">
    <location>
        <position position="377"/>
    </location>
</feature>
<feature type="binding site" evidence="2">
    <location>
        <begin position="175"/>
        <end position="178"/>
    </location>
    <ligand>
        <name>substrate</name>
    </ligand>
</feature>
<feature type="binding site" evidence="5">
    <location>
        <position position="175"/>
    </location>
    <ligand>
        <name>Zn(2+)</name>
        <dbReference type="ChEBI" id="CHEBI:29105"/>
        <note>catalytic</note>
    </ligand>
</feature>
<feature type="binding site" evidence="5">
    <location>
        <position position="178"/>
    </location>
    <ligand>
        <name>Zn(2+)</name>
        <dbReference type="ChEBI" id="CHEBI:29105"/>
        <note>catalytic</note>
    </ligand>
</feature>
<feature type="binding site" evidence="2">
    <location>
        <position position="233"/>
    </location>
    <ligand>
        <name>substrate</name>
    </ligand>
</feature>
<feature type="binding site" evidence="2">
    <location>
        <begin position="250"/>
        <end position="251"/>
    </location>
    <ligand>
        <name>substrate</name>
    </ligand>
</feature>
<feature type="binding site" evidence="5">
    <location>
        <position position="303"/>
    </location>
    <ligand>
        <name>Zn(2+)</name>
        <dbReference type="ChEBI" id="CHEBI:29105"/>
        <note>catalytic</note>
    </ligand>
</feature>
<feature type="binding site" evidence="2">
    <location>
        <begin position="304"/>
        <end position="305"/>
    </location>
    <ligand>
        <name>substrate</name>
    </ligand>
</feature>
<feature type="binding site" evidence="2">
    <location>
        <position position="355"/>
    </location>
    <ligand>
        <name>substrate</name>
    </ligand>
</feature>
<feature type="disulfide bond" evidence="3">
    <location>
        <begin position="244"/>
        <end position="267"/>
    </location>
</feature>
<feature type="disulfide bond" evidence="3">
    <location>
        <begin position="258"/>
        <end position="272"/>
    </location>
</feature>
<sequence>MAFLILVTLALASAHYSGEHFEGEKVFRVNVEDENHINLLHTLASTTQIDFWKPDSVTQIKPHSTADFRVKAEDILTVEDFLKQNELHYEVLINNLRLVLEGQFGRQVPATGHSYEKYNRWETIEAWTQQVTSENPDLISRRSIGTTFEGRTIYLLKVGKAGQNKPAIFMDCGFHAREWISPAFWQWFVREXIRTYGQEIHMTELLDKLDFYVLPVGNIDGYVYTWTKNRMWRKTRSTQVGTNCVGTDPTRNFDAGWCKIGASRNPCDETYCGPAAESEKETKALANFIRSNLSSIKAYLTIHSYSQMMLYPYSYDYKLTENNAELNALAKATVKELATLHGTKYTYGPGATTIYPAAGGSDDWAYDQGIKYSFTFELRDKGRYGFALPESQISPTCEETLLAIKHLARYVLQHLY</sequence>
<keyword id="KW-0121">Carboxypeptidase</keyword>
<keyword id="KW-0968">Cytoplasmic vesicle</keyword>
<keyword id="KW-0903">Direct protein sequencing</keyword>
<keyword id="KW-1015">Disulfide bond</keyword>
<keyword id="KW-0378">Hydrolase</keyword>
<keyword id="KW-0479">Metal-binding</keyword>
<keyword id="KW-0482">Metalloprotease</keyword>
<keyword id="KW-0645">Protease</keyword>
<keyword id="KW-1185">Reference proteome</keyword>
<keyword id="KW-0964">Secreted</keyword>
<keyword id="KW-0732">Signal</keyword>
<keyword id="KW-0862">Zinc</keyword>
<keyword id="KW-0865">Zymogen</keyword>
<evidence type="ECO:0000250" key="1"/>
<evidence type="ECO:0000250" key="2">
    <source>
        <dbReference type="UniProtKB" id="P00730"/>
    </source>
</evidence>
<evidence type="ECO:0000250" key="3">
    <source>
        <dbReference type="UniProtKB" id="P00732"/>
    </source>
</evidence>
<evidence type="ECO:0000250" key="4">
    <source>
        <dbReference type="UniProtKB" id="P15086"/>
    </source>
</evidence>
<evidence type="ECO:0000255" key="5">
    <source>
        <dbReference type="PROSITE-ProRule" id="PRU01379"/>
    </source>
</evidence>
<evidence type="ECO:0000303" key="6">
    <source>
    </source>
</evidence>
<evidence type="ECO:0000305" key="7"/>
<evidence type="ECO:0000305" key="8">
    <source>
    </source>
</evidence>
<accession>P55261</accession>
<organism>
    <name type="scientific">Canis lupus familiaris</name>
    <name type="common">Dog</name>
    <name type="synonym">Canis familiaris</name>
    <dbReference type="NCBI Taxonomy" id="9615"/>
    <lineage>
        <taxon>Eukaryota</taxon>
        <taxon>Metazoa</taxon>
        <taxon>Chordata</taxon>
        <taxon>Craniata</taxon>
        <taxon>Vertebrata</taxon>
        <taxon>Euteleostomi</taxon>
        <taxon>Mammalia</taxon>
        <taxon>Eutheria</taxon>
        <taxon>Laurasiatheria</taxon>
        <taxon>Carnivora</taxon>
        <taxon>Caniformia</taxon>
        <taxon>Canidae</taxon>
        <taxon>Canis</taxon>
    </lineage>
</organism>